<accession>A1K4J8</accession>
<protein>
    <recommendedName>
        <fullName evidence="1">Large ribosomal subunit protein bL28</fullName>
    </recommendedName>
    <alternativeName>
        <fullName evidence="2">50S ribosomal protein L28</fullName>
    </alternativeName>
</protein>
<comment type="similarity">
    <text evidence="1">Belongs to the bacterial ribosomal protein bL28 family.</text>
</comment>
<organism>
    <name type="scientific">Azoarcus sp. (strain BH72)</name>
    <dbReference type="NCBI Taxonomy" id="418699"/>
    <lineage>
        <taxon>Bacteria</taxon>
        <taxon>Pseudomonadati</taxon>
        <taxon>Pseudomonadota</taxon>
        <taxon>Betaproteobacteria</taxon>
        <taxon>Rhodocyclales</taxon>
        <taxon>Zoogloeaceae</taxon>
        <taxon>Azoarcus</taxon>
    </lineage>
</organism>
<gene>
    <name evidence="1" type="primary">rpmB</name>
    <name type="ordered locus">azo1136</name>
</gene>
<proteinExistence type="inferred from homology"/>
<feature type="chain" id="PRO_1000007169" description="Large ribosomal subunit protein bL28">
    <location>
        <begin position="1"/>
        <end position="78"/>
    </location>
</feature>
<name>RL28_AZOSB</name>
<evidence type="ECO:0000255" key="1">
    <source>
        <dbReference type="HAMAP-Rule" id="MF_00373"/>
    </source>
</evidence>
<evidence type="ECO:0000305" key="2"/>
<dbReference type="EMBL" id="AM406670">
    <property type="protein sequence ID" value="CAL93753.1"/>
    <property type="molecule type" value="Genomic_DNA"/>
</dbReference>
<dbReference type="RefSeq" id="WP_011764869.1">
    <property type="nucleotide sequence ID" value="NC_008702.1"/>
</dbReference>
<dbReference type="SMR" id="A1K4J8"/>
<dbReference type="STRING" id="62928.azo1136"/>
<dbReference type="KEGG" id="aoa:dqs_1247"/>
<dbReference type="KEGG" id="azo:azo1136"/>
<dbReference type="eggNOG" id="COG0227">
    <property type="taxonomic scope" value="Bacteria"/>
</dbReference>
<dbReference type="HOGENOM" id="CLU_064548_3_1_4"/>
<dbReference type="OrthoDB" id="9805609at2"/>
<dbReference type="Proteomes" id="UP000002588">
    <property type="component" value="Chromosome"/>
</dbReference>
<dbReference type="GO" id="GO:0022625">
    <property type="term" value="C:cytosolic large ribosomal subunit"/>
    <property type="evidence" value="ECO:0007669"/>
    <property type="project" value="TreeGrafter"/>
</dbReference>
<dbReference type="GO" id="GO:0003735">
    <property type="term" value="F:structural constituent of ribosome"/>
    <property type="evidence" value="ECO:0007669"/>
    <property type="project" value="InterPro"/>
</dbReference>
<dbReference type="GO" id="GO:0006412">
    <property type="term" value="P:translation"/>
    <property type="evidence" value="ECO:0007669"/>
    <property type="project" value="UniProtKB-UniRule"/>
</dbReference>
<dbReference type="FunFam" id="2.30.170.40:FF:000001">
    <property type="entry name" value="50S ribosomal protein L28"/>
    <property type="match status" value="1"/>
</dbReference>
<dbReference type="Gene3D" id="2.30.170.40">
    <property type="entry name" value="Ribosomal protein L28/L24"/>
    <property type="match status" value="1"/>
</dbReference>
<dbReference type="HAMAP" id="MF_00373">
    <property type="entry name" value="Ribosomal_bL28"/>
    <property type="match status" value="1"/>
</dbReference>
<dbReference type="InterPro" id="IPR026569">
    <property type="entry name" value="Ribosomal_bL28"/>
</dbReference>
<dbReference type="InterPro" id="IPR034704">
    <property type="entry name" value="Ribosomal_bL28/bL31-like_sf"/>
</dbReference>
<dbReference type="InterPro" id="IPR001383">
    <property type="entry name" value="Ribosomal_bL28_bact-type"/>
</dbReference>
<dbReference type="InterPro" id="IPR037147">
    <property type="entry name" value="Ribosomal_bL28_sf"/>
</dbReference>
<dbReference type="NCBIfam" id="TIGR00009">
    <property type="entry name" value="L28"/>
    <property type="match status" value="1"/>
</dbReference>
<dbReference type="PANTHER" id="PTHR13528">
    <property type="entry name" value="39S RIBOSOMAL PROTEIN L28, MITOCHONDRIAL"/>
    <property type="match status" value="1"/>
</dbReference>
<dbReference type="PANTHER" id="PTHR13528:SF2">
    <property type="entry name" value="LARGE RIBOSOMAL SUBUNIT PROTEIN BL28M"/>
    <property type="match status" value="1"/>
</dbReference>
<dbReference type="Pfam" id="PF00830">
    <property type="entry name" value="Ribosomal_L28"/>
    <property type="match status" value="1"/>
</dbReference>
<dbReference type="SUPFAM" id="SSF143800">
    <property type="entry name" value="L28p-like"/>
    <property type="match status" value="1"/>
</dbReference>
<sequence>MARVCQVTGKAPMVGNHVSHANNKTKRRFLPNLQNRRFWSEAENRWIRLRVSNAALRTIDKKGIDVVVAELRARGDKI</sequence>
<reference key="1">
    <citation type="journal article" date="2006" name="Nat. Biotechnol.">
        <title>Complete genome of the mutualistic, N2-fixing grass endophyte Azoarcus sp. strain BH72.</title>
        <authorList>
            <person name="Krause A."/>
            <person name="Ramakumar A."/>
            <person name="Bartels D."/>
            <person name="Battistoni F."/>
            <person name="Bekel T."/>
            <person name="Boch J."/>
            <person name="Boehm M."/>
            <person name="Friedrich F."/>
            <person name="Hurek T."/>
            <person name="Krause L."/>
            <person name="Linke B."/>
            <person name="McHardy A.C."/>
            <person name="Sarkar A."/>
            <person name="Schneiker S."/>
            <person name="Syed A.A."/>
            <person name="Thauer R."/>
            <person name="Vorhoelter F.-J."/>
            <person name="Weidner S."/>
            <person name="Puehler A."/>
            <person name="Reinhold-Hurek B."/>
            <person name="Kaiser O."/>
            <person name="Goesmann A."/>
        </authorList>
    </citation>
    <scope>NUCLEOTIDE SEQUENCE [LARGE SCALE GENOMIC DNA]</scope>
    <source>
        <strain>BH72</strain>
    </source>
</reference>
<keyword id="KW-1185">Reference proteome</keyword>
<keyword id="KW-0687">Ribonucleoprotein</keyword>
<keyword id="KW-0689">Ribosomal protein</keyword>